<name>MEPA_ECOK1</name>
<reference key="1">
    <citation type="journal article" date="2007" name="J. Bacteriol.">
        <title>The genome sequence of avian pathogenic Escherichia coli strain O1:K1:H7 shares strong similarities with human extraintestinal pathogenic E. coli genomes.</title>
        <authorList>
            <person name="Johnson T.J."/>
            <person name="Kariyawasam S."/>
            <person name="Wannemuehler Y."/>
            <person name="Mangiamele P."/>
            <person name="Johnson S.J."/>
            <person name="Doetkott C."/>
            <person name="Skyberg J.A."/>
            <person name="Lynne A.M."/>
            <person name="Johnson J.R."/>
            <person name="Nolan L.K."/>
        </authorList>
    </citation>
    <scope>NUCLEOTIDE SEQUENCE [LARGE SCALE GENOMIC DNA]</scope>
</reference>
<proteinExistence type="inferred from homology"/>
<feature type="signal peptide" evidence="1">
    <location>
        <begin position="1"/>
        <end position="19"/>
    </location>
</feature>
<feature type="chain" id="PRO_0000292554" description="Penicillin-insensitive murein endopeptidase">
    <location>
        <begin position="20"/>
        <end position="274"/>
    </location>
</feature>
<feature type="region of interest" description="Disordered" evidence="2">
    <location>
        <begin position="227"/>
        <end position="274"/>
    </location>
</feature>
<feature type="binding site" evidence="1">
    <location>
        <position position="110"/>
    </location>
    <ligand>
        <name>Zn(2+)</name>
        <dbReference type="ChEBI" id="CHEBI:29105"/>
        <label>1</label>
    </ligand>
</feature>
<feature type="binding site" evidence="1">
    <location>
        <position position="113"/>
    </location>
    <ligand>
        <name>Zn(2+)</name>
        <dbReference type="ChEBI" id="CHEBI:29105"/>
        <label>1</label>
    </ligand>
</feature>
<feature type="binding site" evidence="1">
    <location>
        <position position="120"/>
    </location>
    <ligand>
        <name>Zn(2+)</name>
        <dbReference type="ChEBI" id="CHEBI:29105"/>
        <label>1</label>
    </ligand>
</feature>
<feature type="binding site" evidence="1">
    <location>
        <position position="147"/>
    </location>
    <ligand>
        <name>Zn(2+)</name>
        <dbReference type="ChEBI" id="CHEBI:29105"/>
        <label>2</label>
    </ligand>
</feature>
<feature type="binding site" evidence="1">
    <location>
        <position position="150"/>
    </location>
    <ligand>
        <name>Zn(2+)</name>
        <dbReference type="ChEBI" id="CHEBI:29105"/>
        <label>2</label>
    </ligand>
</feature>
<feature type="binding site" evidence="1">
    <location>
        <position position="211"/>
    </location>
    <ligand>
        <name>Zn(2+)</name>
        <dbReference type="ChEBI" id="CHEBI:29105"/>
        <label>1</label>
    </ligand>
</feature>
<feature type="disulfide bond" evidence="1">
    <location>
        <begin position="44"/>
        <end position="265"/>
    </location>
</feature>
<feature type="disulfide bond" evidence="1">
    <location>
        <begin position="187"/>
        <end position="235"/>
    </location>
</feature>
<feature type="disulfide bond" evidence="1">
    <location>
        <begin position="216"/>
        <end position="223"/>
    </location>
</feature>
<protein>
    <recommendedName>
        <fullName evidence="1">Penicillin-insensitive murein endopeptidase</fullName>
        <ecNumber evidence="1">3.4.24.-</ecNumber>
    </recommendedName>
    <alternativeName>
        <fullName evidence="1">D-alanyl-D-alanine-endopeptidase</fullName>
        <shortName evidence="1">DD-endopeptidase</shortName>
    </alternativeName>
</protein>
<accession>A1ADH7</accession>
<gene>
    <name evidence="1" type="primary">mepA</name>
    <name type="ordered locus">Ecok1_22230</name>
    <name type="ORF">APECO1_4236</name>
</gene>
<dbReference type="EC" id="3.4.24.-" evidence="1"/>
<dbReference type="EMBL" id="CP000468">
    <property type="protein sequence ID" value="ABJ01717.1"/>
    <property type="molecule type" value="Genomic_DNA"/>
</dbReference>
<dbReference type="RefSeq" id="WP_001043802.1">
    <property type="nucleotide sequence ID" value="NZ_CADILS010000025.1"/>
</dbReference>
<dbReference type="SMR" id="A1ADH7"/>
<dbReference type="MEROPS" id="M74.001"/>
<dbReference type="KEGG" id="ecv:APECO1_4236"/>
<dbReference type="HOGENOM" id="CLU_052496_0_0_6"/>
<dbReference type="Proteomes" id="UP000008216">
    <property type="component" value="Chromosome"/>
</dbReference>
<dbReference type="GO" id="GO:0030288">
    <property type="term" value="C:outer membrane-bounded periplasmic space"/>
    <property type="evidence" value="ECO:0007669"/>
    <property type="project" value="InterPro"/>
</dbReference>
<dbReference type="GO" id="GO:0046872">
    <property type="term" value="F:metal ion binding"/>
    <property type="evidence" value="ECO:0007669"/>
    <property type="project" value="UniProtKB-KW"/>
</dbReference>
<dbReference type="GO" id="GO:0004222">
    <property type="term" value="F:metalloendopeptidase activity"/>
    <property type="evidence" value="ECO:0007669"/>
    <property type="project" value="UniProtKB-UniRule"/>
</dbReference>
<dbReference type="GO" id="GO:0004252">
    <property type="term" value="F:serine-type endopeptidase activity"/>
    <property type="evidence" value="ECO:0007669"/>
    <property type="project" value="InterPro"/>
</dbReference>
<dbReference type="GO" id="GO:0000270">
    <property type="term" value="P:peptidoglycan metabolic process"/>
    <property type="evidence" value="ECO:0007669"/>
    <property type="project" value="UniProtKB-UniRule"/>
</dbReference>
<dbReference type="GO" id="GO:0006508">
    <property type="term" value="P:proteolysis"/>
    <property type="evidence" value="ECO:0007669"/>
    <property type="project" value="UniProtKB-KW"/>
</dbReference>
<dbReference type="FunFam" id="3.30.1380.10:FF:000002">
    <property type="entry name" value="Penicillin-insensitive murein endopeptidase"/>
    <property type="match status" value="1"/>
</dbReference>
<dbReference type="Gene3D" id="3.30.1380.10">
    <property type="match status" value="1"/>
</dbReference>
<dbReference type="HAMAP" id="MF_01623">
    <property type="entry name" value="MepA"/>
    <property type="match status" value="1"/>
</dbReference>
<dbReference type="InterPro" id="IPR009045">
    <property type="entry name" value="Hedgehog_sig/DD-Pept_Zn-bd_sf"/>
</dbReference>
<dbReference type="InterPro" id="IPR005073">
    <property type="entry name" value="Peptidase_M74"/>
</dbReference>
<dbReference type="NCBIfam" id="NF006947">
    <property type="entry name" value="PRK09429.1"/>
    <property type="match status" value="1"/>
</dbReference>
<dbReference type="Pfam" id="PF03411">
    <property type="entry name" value="Peptidase_M74"/>
    <property type="match status" value="1"/>
</dbReference>
<dbReference type="PIRSF" id="PIRSF018455">
    <property type="entry name" value="MepA"/>
    <property type="match status" value="1"/>
</dbReference>
<dbReference type="SUPFAM" id="SSF55166">
    <property type="entry name" value="Hedgehog/DD-peptidase"/>
    <property type="match status" value="1"/>
</dbReference>
<evidence type="ECO:0000255" key="1">
    <source>
        <dbReference type="HAMAP-Rule" id="MF_01623"/>
    </source>
</evidence>
<evidence type="ECO:0000256" key="2">
    <source>
        <dbReference type="SAM" id="MobiDB-lite"/>
    </source>
</evidence>
<organism>
    <name type="scientific">Escherichia coli O1:K1 / APEC</name>
    <dbReference type="NCBI Taxonomy" id="405955"/>
    <lineage>
        <taxon>Bacteria</taxon>
        <taxon>Pseudomonadati</taxon>
        <taxon>Pseudomonadota</taxon>
        <taxon>Gammaproteobacteria</taxon>
        <taxon>Enterobacterales</taxon>
        <taxon>Enterobacteriaceae</taxon>
        <taxon>Escherichia</taxon>
    </lineage>
</organism>
<keyword id="KW-1015">Disulfide bond</keyword>
<keyword id="KW-0378">Hydrolase</keyword>
<keyword id="KW-0479">Metal-binding</keyword>
<keyword id="KW-0482">Metalloprotease</keyword>
<keyword id="KW-0574">Periplasm</keyword>
<keyword id="KW-0645">Protease</keyword>
<keyword id="KW-1185">Reference proteome</keyword>
<keyword id="KW-0732">Signal</keyword>
<keyword id="KW-0862">Zinc</keyword>
<comment type="function">
    <text evidence="1">Murein endopeptidase that cleaves the D-alanyl-meso-2,6-diamino-pimelyl amide bond that connects peptidoglycan strands. Likely plays a role in the removal of murein from the sacculus.</text>
</comment>
<comment type="cofactor">
    <cofactor evidence="1">
        <name>Zn(2+)</name>
        <dbReference type="ChEBI" id="CHEBI:29105"/>
    </cofactor>
    <text evidence="1">Binds 2 Zn(2+) ions per subunit. Zn(2+) ion 1 is bound in the active site. Zn(2+) ion 2 is bound at the dimer interface by residues from both subunits.</text>
</comment>
<comment type="subunit">
    <text evidence="1">Dimer.</text>
</comment>
<comment type="subcellular location">
    <subcellularLocation>
        <location evidence="1">Periplasm</location>
    </subcellularLocation>
</comment>
<comment type="similarity">
    <text evidence="1">Belongs to the peptidase M74 family.</text>
</comment>
<sequence>MNKTAIALLALLASSASLAATPWQKITQPVPGSAQSIGSFSNGCIVGADTLPIQSEHYQVMRTDQRRYFGHPDLVMFIQRLSRQVSNLGMGTVLIGDMGMPAGGRFNGGHASHQTGLDVDIFLQLPKTRWTSAQLLRPQALDLVSRDGKHVVPALWKPEIFSLIKLAAQDKDVTRIFVNPAIKQQLCLDAGTDRDWLRKVRPWFQHRAHMHVRLRCPADSLECEDQPLPPPGDGCGAELQSWFEPPKPGTTKPEKKTPPPLPPSCQALLDEHVI</sequence>